<feature type="signal peptide" evidence="2">
    <location>
        <begin position="1"/>
        <end position="21"/>
    </location>
</feature>
<feature type="propeptide" id="PRO_0000444283" evidence="3">
    <location>
        <begin position="22"/>
        <end position="25"/>
    </location>
</feature>
<feature type="peptide" id="PRO_0000444284" description="Tachykinin-related peptide 1" evidence="3">
    <location>
        <begin position="28"/>
        <end position="36"/>
    </location>
</feature>
<feature type="propeptide" id="PRO_0000444285" evidence="5">
    <location>
        <begin position="39"/>
        <end position="50"/>
    </location>
</feature>
<feature type="peptide" id="PRO_0000444286" description="Tachykinin-related peptide 2" evidence="3">
    <location>
        <begin position="53"/>
        <end position="61"/>
    </location>
</feature>
<feature type="propeptide" id="PRO_0000444287" evidence="5">
    <location>
        <begin position="65"/>
        <end position="163"/>
    </location>
</feature>
<feature type="peptide" id="PRO_0000444288" description="Tachykinin-related peptide 4" evidence="3">
    <location>
        <begin position="166"/>
        <end position="176"/>
    </location>
</feature>
<feature type="propeptide" id="PRO_0000444289" evidence="5">
    <location>
        <begin position="180"/>
        <end position="183"/>
    </location>
</feature>
<feature type="peptide" id="PRO_0000444290" description="Tachykinin-related peptide 5" evidence="3">
    <location>
        <begin position="186"/>
        <end position="199"/>
    </location>
</feature>
<feature type="propeptide" id="PRO_0000444291" evidence="5">
    <location>
        <begin position="203"/>
        <end position="223"/>
    </location>
</feature>
<feature type="peptide" id="PRO_0000444292" description="Tachykinin-related peptide 6" evidence="3">
    <location>
        <begin position="226"/>
        <end position="235"/>
    </location>
</feature>
<feature type="propeptide" id="PRO_0000444293" evidence="5">
    <location>
        <begin position="239"/>
        <end position="251"/>
    </location>
</feature>
<feature type="modified residue" description="Arginine amide" evidence="3">
    <location>
        <position position="36"/>
    </location>
</feature>
<feature type="modified residue" description="Lysine amide" evidence="3">
    <location>
        <position position="61"/>
    </location>
</feature>
<feature type="modified residue" description="Arginine amide" evidence="3">
    <location>
        <position position="176"/>
    </location>
</feature>
<feature type="modified residue" description="Arginine amide" evidence="3">
    <location>
        <position position="199"/>
    </location>
</feature>
<feature type="modified residue" description="Arginine amide" evidence="3">
    <location>
        <position position="235"/>
    </location>
</feature>
<evidence type="ECO:0000250" key="1">
    <source>
        <dbReference type="UniProtKB" id="Q9VGE8"/>
    </source>
</evidence>
<evidence type="ECO:0000255" key="2"/>
<evidence type="ECO:0000269" key="3">
    <source>
    </source>
</evidence>
<evidence type="ECO:0000303" key="4">
    <source>
    </source>
</evidence>
<evidence type="ECO:0000305" key="5"/>
<reference evidence="5" key="1">
    <citation type="journal article" date="2018" name="J. Proteome Res.">
        <title>Mating-induced differential peptidomics of neuropeptides and protein hormones in Agrotis ipsilon moths.</title>
        <authorList>
            <person name="Diesner M."/>
            <person name="Gallot A."/>
            <person name="Binz H."/>
            <person name="Gaertner C."/>
            <person name="Vitecek S."/>
            <person name="Kahnt J."/>
            <person name="Schachtner J."/>
            <person name="Jacquin-Joly E."/>
            <person name="Gadenne C."/>
        </authorList>
    </citation>
    <scope>NUCLEOTIDE SEQUENCE [MRNA]</scope>
    <scope>PROTEIN SEQUENCE OF 28-35; 53-61; 166-174; 186-199 AND 226-235</scope>
    <scope>TISSUE SPECIFICITY</scope>
    <scope>MASS SPECTROMETRY</scope>
    <scope>IDENTIFICATION BY MASS SPECTROMETRY</scope>
    <scope>AMIDATION AT ARG-36; LYS-61; ARG-176; ARG-199 AND ARG-235</scope>
</reference>
<comment type="function">
    <text evidence="1">Tachykinins are active peptides which excite neurons, evoke behavioral responses, are potent vasodilators and secretagogues, and contract (directly or indirectly) many smooth muscles.</text>
</comment>
<comment type="subcellular location">
    <subcellularLocation>
        <location evidence="5">Secreted</location>
    </subcellularLocation>
</comment>
<comment type="tissue specificity">
    <text evidence="3">Tachykinin-related peptide 1: Expressed in antennal lobe (AL) and gnathal ganglion (GNG) (at protein level). Expression in AL detected in all animals, in GNG in most animals (at protein level). Not expressed in corpora cardiaca (CC) and corpora allata (CA) (at protein level). Tachykinin-related peptide 2: Expressed in antennal lobe (AL) corpora cardiaca (CC) and corpora allata (CA) with expression detected in few animals (at protein level). Not expressed in gnathal ganglion (GNG) (at protein level). Tachykinin-related peptide 4: Expressed in corpora cardiaca (CC), corpora allata (CA), antennal lobe (AL) and gnathal ganglion (GNG) (at protein level). Expression in AL and GNG detected in most animals, in CC and CA detected in few animals (at protein level). Tachykinin-related peptide 5: Expressed in corpora cardiaca (CC), corpora allata (CA), antennal lobe (AL) and gnathal ganglion (GNG) (at protein level). Expression in CC and CA detected in some animals, in AL and GNG in few animals (at protein level). Tachykinin-related peptide 6: Expressed in antennal lobe (AL) and gnathal ganglion (GNG) (at protein level). Expression in AL detected in all animals, in GNG in some animals (at protein level). Not expressed in corpora cardiaca (CC) and corpora allata (CA) (at protein level).</text>
</comment>
<comment type="mass spectrometry" mass="1003.55" method="MALDI" evidence="3">
    <molecule>Tachykinin-related peptide 1</molecule>
    <text>Tachykinin-related peptide 1.</text>
</comment>
<comment type="mass spectrometry" mass="1048.62" method="MALDI" evidence="3">
    <molecule>Tachykinin-related peptide 2</molecule>
    <text>Tachykinin-related peptide 2.</text>
</comment>
<comment type="mass spectrometry" mass="1285.64" method="MALDI" evidence="3">
    <molecule>Tachykinin-related peptide 4</molecule>
    <text>Tachykinin-related peptide 4.</text>
</comment>
<comment type="mass spectrometry" mass="1667.92" method="MALDI" evidence="3">
    <molecule>Tachykinin-related peptide 5</molecule>
    <text>Tachykinin-related peptide 5.</text>
</comment>
<comment type="mass spectrometry" mass="1171.58" method="MALDI" evidence="3">
    <molecule>Tachykinin-related peptide 6</molecule>
    <text>Tachykinin-related peptide 6.</text>
</comment>
<comment type="similarity">
    <text evidence="5">Belongs to the tachykinin family.</text>
</comment>
<proteinExistence type="evidence at protein level"/>
<protein>
    <recommendedName>
        <fullName evidence="5">Tachykinins</fullName>
    </recommendedName>
    <component>
        <recommendedName>
            <fullName evidence="4">Tachykinin-related peptide 1</fullName>
            <shortName evidence="4">TK-1</shortName>
        </recommendedName>
        <alternativeName>
            <fullName evidence="5">VPQGFLGMR-amide</fullName>
        </alternativeName>
    </component>
    <component>
        <recommendedName>
            <fullName evidence="4">Tachykinin-related peptide 2</fullName>
            <shortName evidence="4">TK-2</shortName>
        </recommendedName>
        <alternativeName>
            <fullName evidence="5">KPQFFVGVK-amide</fullName>
        </alternativeName>
    </component>
    <component>
        <recommendedName>
            <fullName evidence="4">Tachykinin-related peptide 4</fullName>
            <shortName evidence="4">TK-4</shortName>
        </recommendedName>
        <alternativeName>
            <fullName evidence="5">AANFNQFYGVR-amide</fullName>
        </alternativeName>
    </component>
    <component>
        <recommendedName>
            <fullName evidence="4">Tachykinin-related peptide 5</fullName>
            <shortName evidence="4">TK-5</shortName>
        </recommendedName>
        <alternativeName>
            <fullName evidence="5">PYDLTFRGKFIGVR-amide</fullName>
        </alternativeName>
    </component>
    <component>
        <recommendedName>
            <fullName evidence="4">Tachykinin-related peptide 6</fullName>
            <shortName evidence="4">TK-6</shortName>
        </recommendedName>
        <alternativeName>
            <fullName evidence="5">KAQMGFFGMR-amide</fullName>
        </alternativeName>
    </component>
</protein>
<organism>
    <name type="scientific">Agrotis ipsilon</name>
    <name type="common">Black cutworm moth</name>
    <dbReference type="NCBI Taxonomy" id="56364"/>
    <lineage>
        <taxon>Eukaryota</taxon>
        <taxon>Metazoa</taxon>
        <taxon>Ecdysozoa</taxon>
        <taxon>Arthropoda</taxon>
        <taxon>Hexapoda</taxon>
        <taxon>Insecta</taxon>
        <taxon>Pterygota</taxon>
        <taxon>Neoptera</taxon>
        <taxon>Endopterygota</taxon>
        <taxon>Lepidoptera</taxon>
        <taxon>Glossata</taxon>
        <taxon>Ditrysia</taxon>
        <taxon>Noctuoidea</taxon>
        <taxon>Noctuidae</taxon>
        <taxon>Noctuinae</taxon>
        <taxon>Noctuini</taxon>
        <taxon>Agrotis</taxon>
    </lineage>
</organism>
<accession>C0HKW2</accession>
<accession>C0HKW3</accession>
<accession>C0HKW4</accession>
<accession>C0HKW5</accession>
<accession>C0HKW6</accession>
<sequence length="251" mass="28785">MGAPRTCLIFITIQLVSLAYAQEVSKRVPQGFLGMRGKKYFDEEGIEQFYKRKPQFFVGVKGKKSLQDILEAPEEYYKRAPMGFMGMRGKKDLGDSQSTELFPKRDGSLIGKIDYSSKEENADPDFPILNELLLQYLSQLDAPRNTYMQSSESMEPEQSNDLDKRAANFNQFYGVRGKKSINNKRPYDLTFRGKFIGVRGKKDLKNSNAHEIKFLVDQNGPLPKRKAQMGFFGMRGKKWTDEPSLEMDMPN</sequence>
<name>TACHY_AGRIP</name>
<keyword id="KW-0027">Amidation</keyword>
<keyword id="KW-0165">Cleavage on pair of basic residues</keyword>
<keyword id="KW-0903">Direct protein sequencing</keyword>
<keyword id="KW-0527">Neuropeptide</keyword>
<keyword id="KW-0964">Secreted</keyword>
<keyword id="KW-0732">Signal</keyword>
<dbReference type="GO" id="GO:0005576">
    <property type="term" value="C:extracellular region"/>
    <property type="evidence" value="ECO:0007669"/>
    <property type="project" value="UniProtKB-SubCell"/>
</dbReference>
<dbReference type="GO" id="GO:0007218">
    <property type="term" value="P:neuropeptide signaling pathway"/>
    <property type="evidence" value="ECO:0007669"/>
    <property type="project" value="UniProtKB-KW"/>
</dbReference>